<evidence type="ECO:0000256" key="1">
    <source>
        <dbReference type="SAM" id="MobiDB-lite"/>
    </source>
</evidence>
<evidence type="ECO:0000269" key="2">
    <source>
    </source>
</evidence>
<dbReference type="EMBL" id="CU329671">
    <property type="protein sequence ID" value="CAB36883.3"/>
    <property type="molecule type" value="Genomic_DNA"/>
</dbReference>
<dbReference type="PIR" id="T39885">
    <property type="entry name" value="T39885"/>
</dbReference>
<dbReference type="RefSeq" id="NP_596337.3">
    <property type="nucleotide sequence ID" value="NM_001022258.3"/>
</dbReference>
<dbReference type="SMR" id="O94645"/>
<dbReference type="FunCoup" id="O94645">
    <property type="interactions" value="387"/>
</dbReference>
<dbReference type="STRING" id="284812.O94645"/>
<dbReference type="iPTMnet" id="O94645"/>
<dbReference type="PaxDb" id="4896-SPBC21.03c.1"/>
<dbReference type="EnsemblFungi" id="SPBC21.03c.1">
    <property type="protein sequence ID" value="SPBC21.03c.1:pep"/>
    <property type="gene ID" value="SPBC21.03c"/>
</dbReference>
<dbReference type="PomBase" id="SPBC21.03c"/>
<dbReference type="VEuPathDB" id="FungiDB:SPBC21.03c"/>
<dbReference type="eggNOG" id="KOG3383">
    <property type="taxonomic scope" value="Eukaryota"/>
</dbReference>
<dbReference type="HOGENOM" id="CLU_041799_2_2_1"/>
<dbReference type="InParanoid" id="O94645"/>
<dbReference type="OMA" id="DVQFIRM"/>
<dbReference type="PRO" id="PR:O94645"/>
<dbReference type="Proteomes" id="UP000002485">
    <property type="component" value="Chromosome II"/>
</dbReference>
<dbReference type="GO" id="GO:0005634">
    <property type="term" value="C:nucleus"/>
    <property type="evidence" value="ECO:0007005"/>
    <property type="project" value="PomBase"/>
</dbReference>
<dbReference type="CDD" id="cd21133">
    <property type="entry name" value="EVE"/>
    <property type="match status" value="1"/>
</dbReference>
<dbReference type="FunFam" id="3.10.590.10:FF:000006">
    <property type="entry name" value="Chromosome 7, whole genome shotgun sequence"/>
    <property type="match status" value="1"/>
</dbReference>
<dbReference type="Gene3D" id="3.10.590.10">
    <property type="entry name" value="ph1033 like domains"/>
    <property type="match status" value="1"/>
</dbReference>
<dbReference type="InterPro" id="IPR052181">
    <property type="entry name" value="5hmC_binding"/>
</dbReference>
<dbReference type="InterPro" id="IPR002740">
    <property type="entry name" value="EVE_domain"/>
</dbReference>
<dbReference type="InterPro" id="IPR015947">
    <property type="entry name" value="PUA-like_sf"/>
</dbReference>
<dbReference type="InterPro" id="IPR047197">
    <property type="entry name" value="THYN1-like_EVE"/>
</dbReference>
<dbReference type="PANTHER" id="PTHR14087">
    <property type="entry name" value="THYMOCYTE NUCLEAR PROTEIN 1"/>
    <property type="match status" value="1"/>
</dbReference>
<dbReference type="PANTHER" id="PTHR14087:SF7">
    <property type="entry name" value="THYMOCYTE NUCLEAR PROTEIN 1"/>
    <property type="match status" value="1"/>
</dbReference>
<dbReference type="Pfam" id="PF01878">
    <property type="entry name" value="EVE"/>
    <property type="match status" value="1"/>
</dbReference>
<dbReference type="SUPFAM" id="SSF88697">
    <property type="entry name" value="PUA domain-like"/>
    <property type="match status" value="1"/>
</dbReference>
<protein>
    <recommendedName>
        <fullName>Uncharacterized protein C21.03c</fullName>
    </recommendedName>
</protein>
<organism>
    <name type="scientific">Schizosaccharomyces pombe (strain 972 / ATCC 24843)</name>
    <name type="common">Fission yeast</name>
    <dbReference type="NCBI Taxonomy" id="284812"/>
    <lineage>
        <taxon>Eukaryota</taxon>
        <taxon>Fungi</taxon>
        <taxon>Dikarya</taxon>
        <taxon>Ascomycota</taxon>
        <taxon>Taphrinomycotina</taxon>
        <taxon>Schizosaccharomycetes</taxon>
        <taxon>Schizosaccharomycetales</taxon>
        <taxon>Schizosaccharomycetaceae</taxon>
        <taxon>Schizosaccharomyces</taxon>
    </lineage>
</organism>
<sequence length="239" mass="28142">MTEDAEKRRYWLMKAEGEPRYVKGINVAFTFEMLEEITEDGKMESWSGVRNYEARNMIRDEIKIGDYAFLYCSNCKFPHIKGVMRICSNSHPDDSAWNSNDPYYDPKSTPQNPRWYSVGVQSEYKLDRPVTLRELKMHKENQLKSMELLNRSRLSISRVKPEEWKFIHELSKQPEPEEIIKARLQEEEKVAKRKRKLNLSDGENKAKSPYSSISENDASLDIIKRSRIKDVRSQKDNAL</sequence>
<reference key="1">
    <citation type="journal article" date="2002" name="Nature">
        <title>The genome sequence of Schizosaccharomyces pombe.</title>
        <authorList>
            <person name="Wood V."/>
            <person name="Gwilliam R."/>
            <person name="Rajandream M.A."/>
            <person name="Lyne M.H."/>
            <person name="Lyne R."/>
            <person name="Stewart A."/>
            <person name="Sgouros J.G."/>
            <person name="Peat N."/>
            <person name="Hayles J."/>
            <person name="Baker S.G."/>
            <person name="Basham D."/>
            <person name="Bowman S."/>
            <person name="Brooks K."/>
            <person name="Brown D."/>
            <person name="Brown S."/>
            <person name="Chillingworth T."/>
            <person name="Churcher C.M."/>
            <person name="Collins M."/>
            <person name="Connor R."/>
            <person name="Cronin A."/>
            <person name="Davis P."/>
            <person name="Feltwell T."/>
            <person name="Fraser A."/>
            <person name="Gentles S."/>
            <person name="Goble A."/>
            <person name="Hamlin N."/>
            <person name="Harris D.E."/>
            <person name="Hidalgo J."/>
            <person name="Hodgson G."/>
            <person name="Holroyd S."/>
            <person name="Hornsby T."/>
            <person name="Howarth S."/>
            <person name="Huckle E.J."/>
            <person name="Hunt S."/>
            <person name="Jagels K."/>
            <person name="James K.D."/>
            <person name="Jones L."/>
            <person name="Jones M."/>
            <person name="Leather S."/>
            <person name="McDonald S."/>
            <person name="McLean J."/>
            <person name="Mooney P."/>
            <person name="Moule S."/>
            <person name="Mungall K.L."/>
            <person name="Murphy L.D."/>
            <person name="Niblett D."/>
            <person name="Odell C."/>
            <person name="Oliver K."/>
            <person name="O'Neil S."/>
            <person name="Pearson D."/>
            <person name="Quail M.A."/>
            <person name="Rabbinowitsch E."/>
            <person name="Rutherford K.M."/>
            <person name="Rutter S."/>
            <person name="Saunders D."/>
            <person name="Seeger K."/>
            <person name="Sharp S."/>
            <person name="Skelton J."/>
            <person name="Simmonds M.N."/>
            <person name="Squares R."/>
            <person name="Squares S."/>
            <person name="Stevens K."/>
            <person name="Taylor K."/>
            <person name="Taylor R.G."/>
            <person name="Tivey A."/>
            <person name="Walsh S.V."/>
            <person name="Warren T."/>
            <person name="Whitehead S."/>
            <person name="Woodward J.R."/>
            <person name="Volckaert G."/>
            <person name="Aert R."/>
            <person name="Robben J."/>
            <person name="Grymonprez B."/>
            <person name="Weltjens I."/>
            <person name="Vanstreels E."/>
            <person name="Rieger M."/>
            <person name="Schaefer M."/>
            <person name="Mueller-Auer S."/>
            <person name="Gabel C."/>
            <person name="Fuchs M."/>
            <person name="Duesterhoeft A."/>
            <person name="Fritzc C."/>
            <person name="Holzer E."/>
            <person name="Moestl D."/>
            <person name="Hilbert H."/>
            <person name="Borzym K."/>
            <person name="Langer I."/>
            <person name="Beck A."/>
            <person name="Lehrach H."/>
            <person name="Reinhardt R."/>
            <person name="Pohl T.M."/>
            <person name="Eger P."/>
            <person name="Zimmermann W."/>
            <person name="Wedler H."/>
            <person name="Wambutt R."/>
            <person name="Purnelle B."/>
            <person name="Goffeau A."/>
            <person name="Cadieu E."/>
            <person name="Dreano S."/>
            <person name="Gloux S."/>
            <person name="Lelaure V."/>
            <person name="Mottier S."/>
            <person name="Galibert F."/>
            <person name="Aves S.J."/>
            <person name="Xiang Z."/>
            <person name="Hunt C."/>
            <person name="Moore K."/>
            <person name="Hurst S.M."/>
            <person name="Lucas M."/>
            <person name="Rochet M."/>
            <person name="Gaillardin C."/>
            <person name="Tallada V.A."/>
            <person name="Garzon A."/>
            <person name="Thode G."/>
            <person name="Daga R.R."/>
            <person name="Cruzado L."/>
            <person name="Jimenez J."/>
            <person name="Sanchez M."/>
            <person name="del Rey F."/>
            <person name="Benito J."/>
            <person name="Dominguez A."/>
            <person name="Revuelta J.L."/>
            <person name="Moreno S."/>
            <person name="Armstrong J."/>
            <person name="Forsburg S.L."/>
            <person name="Cerutti L."/>
            <person name="Lowe T."/>
            <person name="McCombie W.R."/>
            <person name="Paulsen I."/>
            <person name="Potashkin J."/>
            <person name="Shpakovski G.V."/>
            <person name="Ussery D."/>
            <person name="Barrell B.G."/>
            <person name="Nurse P."/>
        </authorList>
    </citation>
    <scope>NUCLEOTIDE SEQUENCE [LARGE SCALE GENOMIC DNA]</scope>
    <source>
        <strain>972 / ATCC 24843</strain>
    </source>
</reference>
<reference key="2">
    <citation type="journal article" date="2011" name="Science">
        <title>Comparative functional genomics of the fission yeasts.</title>
        <authorList>
            <person name="Rhind N."/>
            <person name="Chen Z."/>
            <person name="Yassour M."/>
            <person name="Thompson D.A."/>
            <person name="Haas B.J."/>
            <person name="Habib N."/>
            <person name="Wapinski I."/>
            <person name="Roy S."/>
            <person name="Lin M.F."/>
            <person name="Heiman D.I."/>
            <person name="Young S.K."/>
            <person name="Furuya K."/>
            <person name="Guo Y."/>
            <person name="Pidoux A."/>
            <person name="Chen H.M."/>
            <person name="Robbertse B."/>
            <person name="Goldberg J.M."/>
            <person name="Aoki K."/>
            <person name="Bayne E.H."/>
            <person name="Berlin A.M."/>
            <person name="Desjardins C.A."/>
            <person name="Dobbs E."/>
            <person name="Dukaj L."/>
            <person name="Fan L."/>
            <person name="FitzGerald M.G."/>
            <person name="French C."/>
            <person name="Gujja S."/>
            <person name="Hansen K."/>
            <person name="Keifenheim D."/>
            <person name="Levin J.Z."/>
            <person name="Mosher R.A."/>
            <person name="Mueller C.A."/>
            <person name="Pfiffner J."/>
            <person name="Priest M."/>
            <person name="Russ C."/>
            <person name="Smialowska A."/>
            <person name="Swoboda P."/>
            <person name="Sykes S.M."/>
            <person name="Vaughn M."/>
            <person name="Vengrova S."/>
            <person name="Yoder R."/>
            <person name="Zeng Q."/>
            <person name="Allshire R."/>
            <person name="Baulcombe D."/>
            <person name="Birren B.W."/>
            <person name="Brown W."/>
            <person name="Ekwall K."/>
            <person name="Kellis M."/>
            <person name="Leatherwood J."/>
            <person name="Levin H."/>
            <person name="Margalit H."/>
            <person name="Martienssen R."/>
            <person name="Nieduszynski C.A."/>
            <person name="Spatafora J.W."/>
            <person name="Friedman N."/>
            <person name="Dalgaard J.Z."/>
            <person name="Baumann P."/>
            <person name="Niki H."/>
            <person name="Regev A."/>
            <person name="Nusbaum C."/>
        </authorList>
    </citation>
    <scope>REVISION OF GENE MODEL</scope>
</reference>
<reference key="3">
    <citation type="journal article" date="2006" name="Nat. Biotechnol.">
        <title>ORFeome cloning and global analysis of protein localization in the fission yeast Schizosaccharomyces pombe.</title>
        <authorList>
            <person name="Matsuyama A."/>
            <person name="Arai R."/>
            <person name="Yashiroda Y."/>
            <person name="Shirai A."/>
            <person name="Kamata A."/>
            <person name="Sekido S."/>
            <person name="Kobayashi Y."/>
            <person name="Hashimoto A."/>
            <person name="Hamamoto M."/>
            <person name="Hiraoka Y."/>
            <person name="Horinouchi S."/>
            <person name="Yoshida M."/>
        </authorList>
    </citation>
    <scope>SUBCELLULAR LOCATION [LARGE SCALE ANALYSIS]</scope>
</reference>
<name>YBV3_SCHPO</name>
<keyword id="KW-0539">Nucleus</keyword>
<keyword id="KW-1185">Reference proteome</keyword>
<proteinExistence type="predicted"/>
<feature type="chain" id="PRO_0000317092" description="Uncharacterized protein C21.03c">
    <location>
        <begin position="1"/>
        <end position="239"/>
    </location>
</feature>
<feature type="region of interest" description="Disordered" evidence="1">
    <location>
        <begin position="193"/>
        <end position="214"/>
    </location>
</feature>
<gene>
    <name type="ORF">SPBC21.03c</name>
</gene>
<comment type="subcellular location">
    <subcellularLocation>
        <location evidence="2">Nucleus</location>
    </subcellularLocation>
</comment>
<accession>O94645</accession>